<reference key="1">
    <citation type="journal article" date="1986" name="Virology">
        <title>The nucleotide sequence and genome organization of human papilloma virus type 11.</title>
        <authorList>
            <person name="Dartmann K."/>
            <person name="Schwarz E."/>
            <person name="Gissmann L."/>
            <person name="zur Hausen H."/>
        </authorList>
    </citation>
    <scope>NUCLEOTIDE SEQUENCE [GENOMIC DNA]</scope>
</reference>
<reference key="2">
    <citation type="journal article" date="1996" name="Arch. Otolaryngol. Head Neck Surg.">
        <title>Association of human papillomavirus type 11 DNA with squamous cell carcinoma of the tongue.</title>
        <authorList>
            <person name="Fife K.H."/>
            <person name="Fan L."/>
            <person name="Fritsch M.H."/>
            <person name="Bryan J."/>
            <person name="Brown D.R."/>
        </authorList>
    </citation>
    <scope>NUCLEOTIDE SEQUENCE [GENOMIC DNA]</scope>
</reference>
<reference key="3">
    <citation type="journal article" date="2005" name="Proc. Natl. Acad. Sci. U.S.A.">
        <title>Association of the human papillomavirus type 16 E7 oncoprotein with the 600-kDa retinoblastoma protein-associated factor, p600.</title>
        <authorList>
            <person name="Huh K.-W."/>
            <person name="DeMasi J."/>
            <person name="Ogawa H."/>
            <person name="Nakatani Y."/>
            <person name="Howley P.M."/>
            <person name="Muenger K."/>
        </authorList>
    </citation>
    <scope>INTERACTION WITH HUMAN ZUBR1</scope>
</reference>
<reference key="4">
    <citation type="journal article" date="2002" name="Rev. Med. Virol.">
        <title>Interactions of SV40 large T antigen and other viral proteins with retinoblastoma tumour suppressor.</title>
        <authorList>
            <person name="Lee C."/>
            <person name="Cho Y."/>
        </authorList>
    </citation>
    <scope>REVIEW</scope>
</reference>
<feature type="chain" id="PRO_0000133410" description="Protein E7">
    <location>
        <begin position="1"/>
        <end position="98"/>
    </location>
</feature>
<feature type="zinc finger region" evidence="1">
    <location>
        <begin position="58"/>
        <end position="94"/>
    </location>
</feature>
<feature type="region of interest" description="E7 terminal domain" evidence="1">
    <location>
        <begin position="1"/>
        <end position="42"/>
    </location>
</feature>
<feature type="short sequence motif" description="LXCXE motif; interaction with host RB1 and TMEM173/STING" evidence="1">
    <location>
        <begin position="23"/>
        <end position="27"/>
    </location>
</feature>
<feature type="short sequence motif" description="Nuclear export signal" evidence="1">
    <location>
        <begin position="76"/>
        <end position="84"/>
    </location>
</feature>
<accession>P04020</accession>
<name>VE7_HPV11</name>
<organismHost>
    <name type="scientific">Homo sapiens</name>
    <name type="common">Human</name>
    <dbReference type="NCBI Taxonomy" id="9606"/>
</organismHost>
<keyword id="KW-0010">Activator</keyword>
<keyword id="KW-0238">DNA-binding</keyword>
<keyword id="KW-0244">Early protein</keyword>
<keyword id="KW-1078">G1/S host cell cycle checkpoint dysregulation by virus</keyword>
<keyword id="KW-1035">Host cytoplasm</keyword>
<keyword id="KW-1048">Host nucleus</keyword>
<keyword id="KW-0945">Host-virus interaction</keyword>
<keyword id="KW-1090">Inhibition of host innate immune response by virus</keyword>
<keyword id="KW-1114">Inhibition of host interferon signaling pathway by virus</keyword>
<keyword id="KW-0922">Interferon antiviral system evasion</keyword>
<keyword id="KW-0479">Metal-binding</keyword>
<keyword id="KW-1121">Modulation of host cell cycle by virus</keyword>
<keyword id="KW-0553">Oncogene</keyword>
<keyword id="KW-1185">Reference proteome</keyword>
<keyword id="KW-0804">Transcription</keyword>
<keyword id="KW-0805">Transcription regulation</keyword>
<keyword id="KW-0899">Viral immunoevasion</keyword>
<keyword id="KW-0862">Zinc</keyword>
<keyword id="KW-0863">Zinc-finger</keyword>
<dbReference type="EMBL" id="M14119">
    <property type="protein sequence ID" value="AAA46928.1"/>
    <property type="molecule type" value="Genomic_DNA"/>
</dbReference>
<dbReference type="EMBL" id="L36108">
    <property type="protein sequence ID" value="AAA21704.1"/>
    <property type="molecule type" value="Genomic_DNA"/>
</dbReference>
<dbReference type="PIR" id="A03690">
    <property type="entry name" value="W7WL11"/>
</dbReference>
<dbReference type="SMR" id="P04020"/>
<dbReference type="IntAct" id="P04020">
    <property type="interactions" value="43"/>
</dbReference>
<dbReference type="MINT" id="P04020"/>
<dbReference type="Proteomes" id="UP000008222">
    <property type="component" value="Genome"/>
</dbReference>
<dbReference type="GO" id="GO:0030430">
    <property type="term" value="C:host cell cytoplasm"/>
    <property type="evidence" value="ECO:0007669"/>
    <property type="project" value="UniProtKB-SubCell"/>
</dbReference>
<dbReference type="GO" id="GO:0042025">
    <property type="term" value="C:host cell nucleus"/>
    <property type="evidence" value="ECO:0007669"/>
    <property type="project" value="UniProtKB-SubCell"/>
</dbReference>
<dbReference type="GO" id="GO:0003677">
    <property type="term" value="F:DNA binding"/>
    <property type="evidence" value="ECO:0007669"/>
    <property type="project" value="UniProtKB-UniRule"/>
</dbReference>
<dbReference type="GO" id="GO:0003700">
    <property type="term" value="F:DNA-binding transcription factor activity"/>
    <property type="evidence" value="ECO:0007669"/>
    <property type="project" value="UniProtKB-UniRule"/>
</dbReference>
<dbReference type="GO" id="GO:0019904">
    <property type="term" value="F:protein domain specific binding"/>
    <property type="evidence" value="ECO:0007669"/>
    <property type="project" value="UniProtKB-UniRule"/>
</dbReference>
<dbReference type="GO" id="GO:0008270">
    <property type="term" value="F:zinc ion binding"/>
    <property type="evidence" value="ECO:0007669"/>
    <property type="project" value="UniProtKB-KW"/>
</dbReference>
<dbReference type="GO" id="GO:0006351">
    <property type="term" value="P:DNA-templated transcription"/>
    <property type="evidence" value="ECO:0007669"/>
    <property type="project" value="UniProtKB-UniRule"/>
</dbReference>
<dbReference type="GO" id="GO:0039645">
    <property type="term" value="P:symbiont-mediated perturbation of host cell cycle G1/S transition checkpoint"/>
    <property type="evidence" value="ECO:0007669"/>
    <property type="project" value="UniProtKB-UniRule"/>
</dbReference>
<dbReference type="GO" id="GO:0052170">
    <property type="term" value="P:symbiont-mediated suppression of host innate immune response"/>
    <property type="evidence" value="ECO:0007669"/>
    <property type="project" value="UniProtKB-KW"/>
</dbReference>
<dbReference type="GO" id="GO:0039502">
    <property type="term" value="P:symbiont-mediated suppression of host type I interferon-mediated signaling pathway"/>
    <property type="evidence" value="ECO:0007669"/>
    <property type="project" value="UniProtKB-UniRule"/>
</dbReference>
<dbReference type="Gene3D" id="3.30.160.330">
    <property type="match status" value="1"/>
</dbReference>
<dbReference type="HAMAP" id="MF_04004">
    <property type="entry name" value="PPV_E7"/>
    <property type="match status" value="1"/>
</dbReference>
<dbReference type="InterPro" id="IPR000148">
    <property type="entry name" value="Papilloma_E7"/>
</dbReference>
<dbReference type="Pfam" id="PF00527">
    <property type="entry name" value="E7"/>
    <property type="match status" value="1"/>
</dbReference>
<dbReference type="PIRSF" id="PIRSF003407">
    <property type="entry name" value="Papvi_E7"/>
    <property type="match status" value="1"/>
</dbReference>
<dbReference type="SUPFAM" id="SSF161234">
    <property type="entry name" value="E7 C-terminal domain-like"/>
    <property type="match status" value="1"/>
</dbReference>
<gene>
    <name evidence="1" type="primary">E7</name>
</gene>
<evidence type="ECO:0000255" key="1">
    <source>
        <dbReference type="HAMAP-Rule" id="MF_04004"/>
    </source>
</evidence>
<evidence type="ECO:0000269" key="2">
    <source>
    </source>
</evidence>
<comment type="function">
    <text evidence="1">Plays a role in viral genome replication by driving entry of quiescent cells into the cell cycle. Stimulation of progression from G1 to S phase allows the virus to efficiently use the cellular DNA replicating machinery to achieve viral genome replication. E7 protein has both transforming and trans-activating activities. Induces the disassembly of the E2F1 transcription factor from RB1, with subsequent transcriptional activation of E2F1-regulated S-phase genes. Interferes with host histone deacetylation mediated by HDAC1 and HDAC2, leading to transcription activation. Also plays a role in the inhibition of both antiviral and antiproliferative functions of host interferon alpha. Interaction with host TMEM173/STING impairs the ability of TMEM173/STING to sense cytosolic DNA and promote the production of type I interferon (IFN-alpha and IFN-beta).</text>
</comment>
<comment type="subunit">
    <text evidence="1 2">Homodimer. Homooligomer. Interacts with host RB1; this interaction induces dissociation of RB1-E2F1 complex thereby disrupting RB1 activity. Interacts with host EP300; this interaction represses EP300 transcriptional activity. Interacts with protein E2; this interaction inhibits E7 oncogenic activity. Interacts with host TMEM173/STING; this interaction impairs the ability of TMEM173/STING to sense cytosolic DNA and promote the production of type I interferon (IFN-alpha and IFN-beta). Interacts with host ZUBR1.</text>
</comment>
<comment type="interaction">
    <interactant intactId="EBI-7005254">
        <id>P04020</id>
    </interactant>
    <interactant intactId="EBI-447544">
        <id>P01106</id>
        <label>MYC</label>
    </interactant>
    <organismsDiffer>true</organismsDiffer>
    <experiments>2</experiments>
</comment>
<comment type="interaction">
    <interactant intactId="EBI-7005254">
        <id>P04020</id>
    </interactant>
    <interactant intactId="EBI-712311">
        <id>P67775</id>
        <label>PPP2CA</label>
    </interactant>
    <organismsDiffer>true</organismsDiffer>
    <experiments>2</experiments>
</comment>
<comment type="interaction">
    <interactant intactId="EBI-7005254">
        <id>P04020</id>
    </interactant>
    <interactant intactId="EBI-302388">
        <id>P30153</id>
        <label>PPP2R1A</label>
    </interactant>
    <organismsDiffer>true</organismsDiffer>
    <experiments>2</experiments>
</comment>
<comment type="interaction">
    <interactant intactId="EBI-7005254">
        <id>P04020</id>
    </interactant>
    <interactant intactId="EBI-491274">
        <id>P06400</id>
        <label>RB1</label>
    </interactant>
    <organismsDiffer>true</organismsDiffer>
    <experiments>3</experiments>
</comment>
<comment type="interaction">
    <interactant intactId="EBI-7005254">
        <id>P04020</id>
    </interactant>
    <interactant intactId="EBI-1995940">
        <id>Q5T4S7</id>
        <label>UBR4</label>
    </interactant>
    <organismsDiffer>true</organismsDiffer>
    <experiments>2</experiments>
</comment>
<comment type="subcellular location">
    <subcellularLocation>
        <location evidence="1">Host cytoplasm</location>
    </subcellularLocation>
    <subcellularLocation>
        <location evidence="1">Host nucleus</location>
    </subcellularLocation>
    <text evidence="1">Predominantly found in the host nucleus.</text>
</comment>
<comment type="domain">
    <text evidence="1">The E7 terminal domain is an intrinsically disordered domain, whose flexibility and conformational transitions confer target adaptability to the oncoprotein. It allows adaptation to a variety of protein targets and exposes the PEST degradation sequence that regulates its turnover in the cell.</text>
</comment>
<comment type="PTM">
    <text evidence="1">Highly phosphorylated.</text>
</comment>
<comment type="similarity">
    <text evidence="1">Belongs to the papillomaviridae E7 protein family.</text>
</comment>
<organism>
    <name type="scientific">Human papillomavirus 11</name>
    <dbReference type="NCBI Taxonomy" id="10580"/>
    <lineage>
        <taxon>Viruses</taxon>
        <taxon>Monodnaviria</taxon>
        <taxon>Shotokuvirae</taxon>
        <taxon>Cossaviricota</taxon>
        <taxon>Papovaviricetes</taxon>
        <taxon>Zurhausenvirales</taxon>
        <taxon>Papillomaviridae</taxon>
        <taxon>Firstpapillomavirinae</taxon>
        <taxon>Alphapapillomavirus</taxon>
        <taxon>Alphapapillomavirus 10</taxon>
    </lineage>
</organism>
<protein>
    <recommendedName>
        <fullName evidence="1">Protein E7</fullName>
    </recommendedName>
</protein>
<proteinExistence type="evidence at protein level"/>
<sequence>MHGRLVTLKDIVLDLQPPDPVGLHCYEQLEDSSEDEVDKVDKQDAQPLTQHYQILTCCCGCDSNVRLVVECTDGDIRQLQDLLLGTLNIVCPICAPKP</sequence>